<sequence length="215" mass="24122">MYFHALIPFKPVNPKTRLSCILNQEEREAFARAMLEDVIAAVQKSGCSATLLCTHSFKHENALVAVRTEPLNDAINWALGQFHCPALIIMGDIPLVTAGDIQRLIRTEKDMSIVPGRGGGTNIIFLKKPRCFRADYYGASFLDHMRIAEECGFSVEVIDSFRMSTDIDEKEDLVEILIHGKGRRSREYLENSGFSIALDEKGRVGVQRDPHEEAL</sequence>
<name>COFC_METMJ</name>
<feature type="chain" id="PRO_0000398750" description="2-phospho-L-lactate guanylyltransferase">
    <location>
        <begin position="1"/>
        <end position="215"/>
    </location>
</feature>
<organism>
    <name type="scientific">Methanoculleus marisnigri (strain ATCC 35101 / DSM 1498 / JR1)</name>
    <dbReference type="NCBI Taxonomy" id="368407"/>
    <lineage>
        <taxon>Archaea</taxon>
        <taxon>Methanobacteriati</taxon>
        <taxon>Methanobacteriota</taxon>
        <taxon>Stenosarchaea group</taxon>
        <taxon>Methanomicrobia</taxon>
        <taxon>Methanomicrobiales</taxon>
        <taxon>Methanomicrobiaceae</taxon>
        <taxon>Methanoculleus</taxon>
    </lineage>
</organism>
<reference key="1">
    <citation type="journal article" date="2009" name="Stand. Genomic Sci.">
        <title>Complete genome sequence of Methanoculleus marisnigri Romesser et al. 1981 type strain JR1.</title>
        <authorList>
            <person name="Anderson I.J."/>
            <person name="Sieprawska-Lupa M."/>
            <person name="Lapidus A."/>
            <person name="Nolan M."/>
            <person name="Copeland A."/>
            <person name="Glavina Del Rio T."/>
            <person name="Tice H."/>
            <person name="Dalin E."/>
            <person name="Barry K."/>
            <person name="Saunders E."/>
            <person name="Han C."/>
            <person name="Brettin T."/>
            <person name="Detter J.C."/>
            <person name="Bruce D."/>
            <person name="Mikhailova N."/>
            <person name="Pitluck S."/>
            <person name="Hauser L."/>
            <person name="Land M."/>
            <person name="Lucas S."/>
            <person name="Richardson P."/>
            <person name="Whitman W.B."/>
            <person name="Kyrpides N.C."/>
        </authorList>
    </citation>
    <scope>NUCLEOTIDE SEQUENCE [LARGE SCALE GENOMIC DNA]</scope>
    <source>
        <strain>ATCC 35101 / DSM 1498 / JR1</strain>
    </source>
</reference>
<protein>
    <recommendedName>
        <fullName evidence="1">2-phospho-L-lactate guanylyltransferase</fullName>
        <shortName evidence="1">LP guanylyltransferase</shortName>
        <ecNumber evidence="1">2.7.7.68</ecNumber>
    </recommendedName>
</protein>
<gene>
    <name evidence="1" type="primary">cofC</name>
    <name type="ordered locus">Memar_1837</name>
</gene>
<proteinExistence type="inferred from homology"/>
<evidence type="ECO:0000255" key="1">
    <source>
        <dbReference type="HAMAP-Rule" id="MF_02114"/>
    </source>
</evidence>
<dbReference type="EC" id="2.7.7.68" evidence="1"/>
<dbReference type="EMBL" id="CP000562">
    <property type="protein sequence ID" value="ABN57763.1"/>
    <property type="molecule type" value="Genomic_DNA"/>
</dbReference>
<dbReference type="RefSeq" id="WP_011844672.1">
    <property type="nucleotide sequence ID" value="NC_009051.1"/>
</dbReference>
<dbReference type="SMR" id="A3CWL3"/>
<dbReference type="STRING" id="368407.Memar_1837"/>
<dbReference type="GeneID" id="4848298"/>
<dbReference type="GeneID" id="76729913"/>
<dbReference type="KEGG" id="mem:Memar_1837"/>
<dbReference type="eggNOG" id="arCOG04472">
    <property type="taxonomic scope" value="Archaea"/>
</dbReference>
<dbReference type="HOGENOM" id="CLU_076569_2_0_2"/>
<dbReference type="OrthoDB" id="11179at2157"/>
<dbReference type="UniPathway" id="UPA00071"/>
<dbReference type="Proteomes" id="UP000002146">
    <property type="component" value="Chromosome"/>
</dbReference>
<dbReference type="GO" id="GO:0005525">
    <property type="term" value="F:GTP binding"/>
    <property type="evidence" value="ECO:0007669"/>
    <property type="project" value="UniProtKB-KW"/>
</dbReference>
<dbReference type="GO" id="GO:0043814">
    <property type="term" value="F:phospholactate guanylyltransferase activity"/>
    <property type="evidence" value="ECO:0007669"/>
    <property type="project" value="UniProtKB-EC"/>
</dbReference>
<dbReference type="GO" id="GO:0052645">
    <property type="term" value="P:F420-0 metabolic process"/>
    <property type="evidence" value="ECO:0007669"/>
    <property type="project" value="UniProtKB-UniRule"/>
</dbReference>
<dbReference type="Gene3D" id="6.10.140.50">
    <property type="match status" value="1"/>
</dbReference>
<dbReference type="Gene3D" id="3.90.550.10">
    <property type="entry name" value="Spore Coat Polysaccharide Biosynthesis Protein SpsA, Chain A"/>
    <property type="match status" value="1"/>
</dbReference>
<dbReference type="HAMAP" id="MF_02114">
    <property type="entry name" value="CofC"/>
    <property type="match status" value="1"/>
</dbReference>
<dbReference type="InterPro" id="IPR002835">
    <property type="entry name" value="CofC"/>
</dbReference>
<dbReference type="InterPro" id="IPR029044">
    <property type="entry name" value="Nucleotide-diphossugar_trans"/>
</dbReference>
<dbReference type="NCBIfam" id="TIGR03552">
    <property type="entry name" value="F420_cofC"/>
    <property type="match status" value="1"/>
</dbReference>
<dbReference type="PANTHER" id="PTHR40392">
    <property type="entry name" value="2-PHOSPHO-L-LACTATE GUANYLYLTRANSFERASE"/>
    <property type="match status" value="1"/>
</dbReference>
<dbReference type="PANTHER" id="PTHR40392:SF1">
    <property type="entry name" value="2-PHOSPHO-L-LACTATE GUANYLYLTRANSFERASE"/>
    <property type="match status" value="1"/>
</dbReference>
<dbReference type="Pfam" id="PF01983">
    <property type="entry name" value="CofC"/>
    <property type="match status" value="1"/>
</dbReference>
<dbReference type="SUPFAM" id="SSF53448">
    <property type="entry name" value="Nucleotide-diphospho-sugar transferases"/>
    <property type="match status" value="1"/>
</dbReference>
<keyword id="KW-0342">GTP-binding</keyword>
<keyword id="KW-0547">Nucleotide-binding</keyword>
<keyword id="KW-0548">Nucleotidyltransferase</keyword>
<keyword id="KW-0808">Transferase</keyword>
<comment type="function">
    <text evidence="1">Guanylyltransferase that catalyzes the activation of (2S)-2-phospholactate (2-PL) as (2S)-lactyl-2-diphospho-5'-guanosine, via the condensation of 2-PL with GTP. It is involved in the biosynthesis of coenzyme F420, a hydride carrier cofactor.</text>
</comment>
<comment type="catalytic activity">
    <reaction evidence="1">
        <text>(2S)-2-phospholactate + GTP + H(+) = (2S)-lactyl-2-diphospho-5'-guanosine + diphosphate</text>
        <dbReference type="Rhea" id="RHEA:63424"/>
        <dbReference type="ChEBI" id="CHEBI:15378"/>
        <dbReference type="ChEBI" id="CHEBI:33019"/>
        <dbReference type="ChEBI" id="CHEBI:37565"/>
        <dbReference type="ChEBI" id="CHEBI:59435"/>
        <dbReference type="ChEBI" id="CHEBI:59906"/>
        <dbReference type="EC" id="2.7.7.68"/>
    </reaction>
</comment>
<comment type="pathway">
    <text evidence="1">Cofactor biosynthesis; coenzyme F420 biosynthesis.</text>
</comment>
<comment type="subunit">
    <text evidence="1">Homodimer.</text>
</comment>
<comment type="similarity">
    <text evidence="1">Belongs to the CofC family.</text>
</comment>
<accession>A3CWL3</accession>